<organism>
    <name type="scientific">Phaeodactylum tricornutum (strain CCAP 1055/1)</name>
    <dbReference type="NCBI Taxonomy" id="556484"/>
    <lineage>
        <taxon>Eukaryota</taxon>
        <taxon>Sar</taxon>
        <taxon>Stramenopiles</taxon>
        <taxon>Ochrophyta</taxon>
        <taxon>Bacillariophyta</taxon>
        <taxon>Bacillariophyceae</taxon>
        <taxon>Bacillariophycidae</taxon>
        <taxon>Naviculales</taxon>
        <taxon>Phaeodactylaceae</taxon>
        <taxon>Phaeodactylum</taxon>
    </lineage>
</organism>
<sequence length="98" mass="11651">MPLLRKYEIMILLTEEFNDSELKTWVFNYAKNLRKFSVCDISVISRGKHNLAYPIETKMKGNYIQLNFSSMPKYITNFSKTLKMDSNVLRFLVFNKQL</sequence>
<evidence type="ECO:0000255" key="1">
    <source>
        <dbReference type="HAMAP-Rule" id="MF_00360"/>
    </source>
</evidence>
<evidence type="ECO:0000305" key="2"/>
<accession>A0T0L0</accession>
<feature type="chain" id="PRO_0000277030" description="Small ribosomal subunit protein bS6c">
    <location>
        <begin position="1"/>
        <end position="98"/>
    </location>
</feature>
<gene>
    <name evidence="1" type="primary">rps6</name>
</gene>
<reference key="1">
    <citation type="journal article" date="2007" name="Mol. Genet. Genomics">
        <title>Chloroplast genomes of the diatoms Phaeodactylum tricornutum and Thalassiosira pseudonana: comparison with other plastid genomes of the red lineage.</title>
        <authorList>
            <person name="Oudot-Le Secq M.-P."/>
            <person name="Grimwood J."/>
            <person name="Shapiro H."/>
            <person name="Armbrust E.V."/>
            <person name="Bowler C."/>
            <person name="Green B.R."/>
        </authorList>
    </citation>
    <scope>NUCLEOTIDE SEQUENCE [LARGE SCALE GENOMIC DNA]</scope>
    <source>
        <strain>CCAP 1055/1</strain>
    </source>
</reference>
<name>RR6_PHATC</name>
<comment type="function">
    <text evidence="1">Binds together with bS18 to 16S ribosomal RNA.</text>
</comment>
<comment type="subcellular location">
    <subcellularLocation>
        <location>Plastid</location>
        <location>Chloroplast</location>
    </subcellularLocation>
</comment>
<comment type="similarity">
    <text evidence="1">Belongs to the bacterial ribosomal protein bS6 family.</text>
</comment>
<geneLocation type="chloroplast"/>
<protein>
    <recommendedName>
        <fullName evidence="1">Small ribosomal subunit protein bS6c</fullName>
    </recommendedName>
    <alternativeName>
        <fullName evidence="2">30S ribosomal protein S6, chloroplastic</fullName>
    </alternativeName>
</protein>
<dbReference type="EMBL" id="EF067920">
    <property type="protein sequence ID" value="ABK20708.1"/>
    <property type="molecule type" value="Genomic_DNA"/>
</dbReference>
<dbReference type="RefSeq" id="YP_874485.1">
    <property type="nucleotide sequence ID" value="NC_008588.1"/>
</dbReference>
<dbReference type="SMR" id="A0T0L0"/>
<dbReference type="GeneID" id="4524688"/>
<dbReference type="InParanoid" id="A0T0L0"/>
<dbReference type="Proteomes" id="UP000000759">
    <property type="component" value="Chloroplast"/>
</dbReference>
<dbReference type="GO" id="GO:0009507">
    <property type="term" value="C:chloroplast"/>
    <property type="evidence" value="ECO:0007669"/>
    <property type="project" value="UniProtKB-SubCell"/>
</dbReference>
<dbReference type="GO" id="GO:1990904">
    <property type="term" value="C:ribonucleoprotein complex"/>
    <property type="evidence" value="ECO:0007669"/>
    <property type="project" value="UniProtKB-KW"/>
</dbReference>
<dbReference type="GO" id="GO:0005840">
    <property type="term" value="C:ribosome"/>
    <property type="evidence" value="ECO:0007669"/>
    <property type="project" value="UniProtKB-KW"/>
</dbReference>
<dbReference type="GO" id="GO:0070181">
    <property type="term" value="F:small ribosomal subunit rRNA binding"/>
    <property type="evidence" value="ECO:0007669"/>
    <property type="project" value="TreeGrafter"/>
</dbReference>
<dbReference type="GO" id="GO:0003735">
    <property type="term" value="F:structural constituent of ribosome"/>
    <property type="evidence" value="ECO:0007669"/>
    <property type="project" value="InterPro"/>
</dbReference>
<dbReference type="GO" id="GO:0006412">
    <property type="term" value="P:translation"/>
    <property type="evidence" value="ECO:0007669"/>
    <property type="project" value="UniProtKB-UniRule"/>
</dbReference>
<dbReference type="CDD" id="cd00473">
    <property type="entry name" value="bS6"/>
    <property type="match status" value="1"/>
</dbReference>
<dbReference type="Gene3D" id="3.30.70.60">
    <property type="match status" value="1"/>
</dbReference>
<dbReference type="HAMAP" id="MF_00360">
    <property type="entry name" value="Ribosomal_bS6"/>
    <property type="match status" value="1"/>
</dbReference>
<dbReference type="InterPro" id="IPR000529">
    <property type="entry name" value="Ribosomal_bS6"/>
</dbReference>
<dbReference type="InterPro" id="IPR035980">
    <property type="entry name" value="Ribosomal_bS6_sf"/>
</dbReference>
<dbReference type="InterPro" id="IPR020814">
    <property type="entry name" value="Ribosomal_S6_plastid/chlpt"/>
</dbReference>
<dbReference type="InterPro" id="IPR014717">
    <property type="entry name" value="Transl_elong_EF1B/ribsomal_bS6"/>
</dbReference>
<dbReference type="NCBIfam" id="TIGR00166">
    <property type="entry name" value="S6"/>
    <property type="match status" value="1"/>
</dbReference>
<dbReference type="PANTHER" id="PTHR21011">
    <property type="entry name" value="MITOCHONDRIAL 28S RIBOSOMAL PROTEIN S6"/>
    <property type="match status" value="1"/>
</dbReference>
<dbReference type="PANTHER" id="PTHR21011:SF1">
    <property type="entry name" value="SMALL RIBOSOMAL SUBUNIT PROTEIN BS6M"/>
    <property type="match status" value="1"/>
</dbReference>
<dbReference type="Pfam" id="PF01250">
    <property type="entry name" value="Ribosomal_S6"/>
    <property type="match status" value="1"/>
</dbReference>
<dbReference type="SUPFAM" id="SSF54995">
    <property type="entry name" value="Ribosomal protein S6"/>
    <property type="match status" value="1"/>
</dbReference>
<proteinExistence type="inferred from homology"/>
<keyword id="KW-0150">Chloroplast</keyword>
<keyword id="KW-0934">Plastid</keyword>
<keyword id="KW-1185">Reference proteome</keyword>
<keyword id="KW-0687">Ribonucleoprotein</keyword>
<keyword id="KW-0689">Ribosomal protein</keyword>
<keyword id="KW-0694">RNA-binding</keyword>
<keyword id="KW-0699">rRNA-binding</keyword>